<comment type="function">
    <text evidence="1">Transcriptional corepressor. Acts as a dominant repressor towards other family members. Inhibits NF-kappa-B-regulated gene expression. May be required for the initiation and maintenance of the differentiated state. Essential for the transcriptional repressor activity of SIX3 during retina and lens development (By similarity).</text>
</comment>
<comment type="subunit">
    <text evidence="2 3">Homooligomer and heterooligomer with other family members. Binds TCF7 and the NF-kappa-B subunit RELA. Interacts with PHF12. Interacts (via Q domain) with SIX3. Interacts with SIX6 (By similarity).</text>
</comment>
<comment type="subcellular location">
    <subcellularLocation>
        <location evidence="1">Nucleus</location>
    </subcellularLocation>
</comment>
<comment type="domain">
    <text>Lacks the C-terminal WD repeats.</text>
</comment>
<comment type="PTM">
    <text evidence="1">Ubiquitinated by XIAP/BIRC4.</text>
</comment>
<comment type="similarity">
    <text evidence="5">Belongs to the WD repeat Groucho/TLE family.</text>
</comment>
<accession>P63003</accession>
<accession>Q06195</accession>
<accession>Q3MIF3</accession>
<organism>
    <name type="scientific">Rattus norvegicus</name>
    <name type="common">Rat</name>
    <dbReference type="NCBI Taxonomy" id="10116"/>
    <lineage>
        <taxon>Eukaryota</taxon>
        <taxon>Metazoa</taxon>
        <taxon>Chordata</taxon>
        <taxon>Craniata</taxon>
        <taxon>Vertebrata</taxon>
        <taxon>Euteleostomi</taxon>
        <taxon>Mammalia</taxon>
        <taxon>Eutheria</taxon>
        <taxon>Euarchontoglires</taxon>
        <taxon>Glires</taxon>
        <taxon>Rodentia</taxon>
        <taxon>Myomorpha</taxon>
        <taxon>Muroidea</taxon>
        <taxon>Muridae</taxon>
        <taxon>Murinae</taxon>
        <taxon>Rattus</taxon>
    </lineage>
</organism>
<name>TLE5_RAT</name>
<dbReference type="EMBL" id="L14462">
    <property type="protein sequence ID" value="AAC37639.1"/>
    <property type="molecule type" value="mRNA"/>
</dbReference>
<dbReference type="EMBL" id="BC101855">
    <property type="protein sequence ID" value="AAI01856.1"/>
    <property type="molecule type" value="mRNA"/>
</dbReference>
<dbReference type="PIR" id="A49555">
    <property type="entry name" value="A49555"/>
</dbReference>
<dbReference type="RefSeq" id="NP_062093.1">
    <property type="nucleotide sequence ID" value="NM_019220.1"/>
</dbReference>
<dbReference type="SMR" id="P63003"/>
<dbReference type="BioGRID" id="248109">
    <property type="interactions" value="1"/>
</dbReference>
<dbReference type="FunCoup" id="P63003">
    <property type="interactions" value="410"/>
</dbReference>
<dbReference type="STRING" id="10116.ENSRNOP00000071178"/>
<dbReference type="iPTMnet" id="P63003"/>
<dbReference type="PhosphoSitePlus" id="P63003"/>
<dbReference type="jPOST" id="P63003"/>
<dbReference type="PaxDb" id="10116-ENSRNOP00000059140"/>
<dbReference type="Ensembl" id="ENSRNOT00000113477.1">
    <property type="protein sequence ID" value="ENSRNOP00000092723.1"/>
    <property type="gene ID" value="ENSRNOG00000052025.2"/>
</dbReference>
<dbReference type="GeneID" id="29466"/>
<dbReference type="KEGG" id="rno:29466"/>
<dbReference type="UCSC" id="RGD:2731">
    <property type="organism name" value="rat"/>
</dbReference>
<dbReference type="AGR" id="RGD:2731"/>
<dbReference type="CTD" id="166"/>
<dbReference type="RGD" id="2731">
    <property type="gene designation" value="Tle5"/>
</dbReference>
<dbReference type="eggNOG" id="KOG0639">
    <property type="taxonomic scope" value="Eukaryota"/>
</dbReference>
<dbReference type="GeneTree" id="ENSGT01030000234519"/>
<dbReference type="InParanoid" id="P63003"/>
<dbReference type="PhylomeDB" id="P63003"/>
<dbReference type="PRO" id="PR:P63003"/>
<dbReference type="Proteomes" id="UP000002494">
    <property type="component" value="Chromosome 7"/>
</dbReference>
<dbReference type="GO" id="GO:0005634">
    <property type="term" value="C:nucleus"/>
    <property type="evidence" value="ECO:0000266"/>
    <property type="project" value="RGD"/>
</dbReference>
<dbReference type="GO" id="GO:0003714">
    <property type="term" value="F:transcription corepressor activity"/>
    <property type="evidence" value="ECO:0000266"/>
    <property type="project" value="RGD"/>
</dbReference>
<dbReference type="GO" id="GO:0090090">
    <property type="term" value="P:negative regulation of canonical Wnt signaling pathway"/>
    <property type="evidence" value="ECO:0000266"/>
    <property type="project" value="RGD"/>
</dbReference>
<dbReference type="GO" id="GO:0045892">
    <property type="term" value="P:negative regulation of DNA-templated transcription"/>
    <property type="evidence" value="ECO:0000266"/>
    <property type="project" value="RGD"/>
</dbReference>
<dbReference type="GO" id="GO:0010629">
    <property type="term" value="P:negative regulation of gene expression"/>
    <property type="evidence" value="ECO:0000266"/>
    <property type="project" value="RGD"/>
</dbReference>
<dbReference type="GO" id="GO:0060761">
    <property type="term" value="P:negative regulation of response to cytokine stimulus"/>
    <property type="evidence" value="ECO:0000266"/>
    <property type="project" value="RGD"/>
</dbReference>
<dbReference type="GO" id="GO:0000122">
    <property type="term" value="P:negative regulation of transcription by RNA polymerase II"/>
    <property type="evidence" value="ECO:0000266"/>
    <property type="project" value="RGD"/>
</dbReference>
<dbReference type="GO" id="GO:2000210">
    <property type="term" value="P:positive regulation of anoikis"/>
    <property type="evidence" value="ECO:0000266"/>
    <property type="project" value="RGD"/>
</dbReference>
<dbReference type="GO" id="GO:0040008">
    <property type="term" value="P:regulation of growth"/>
    <property type="evidence" value="ECO:0000266"/>
    <property type="project" value="RGD"/>
</dbReference>
<dbReference type="GO" id="GO:0006357">
    <property type="term" value="P:regulation of transcription by RNA polymerase II"/>
    <property type="evidence" value="ECO:0000266"/>
    <property type="project" value="RGD"/>
</dbReference>
<dbReference type="GO" id="GO:0070555">
    <property type="term" value="P:response to interleukin-1"/>
    <property type="evidence" value="ECO:0000266"/>
    <property type="project" value="RGD"/>
</dbReference>
<dbReference type="GO" id="GO:0001501">
    <property type="term" value="P:skeletal system development"/>
    <property type="evidence" value="ECO:0000266"/>
    <property type="project" value="RGD"/>
</dbReference>
<dbReference type="GO" id="GO:0016055">
    <property type="term" value="P:Wnt signaling pathway"/>
    <property type="evidence" value="ECO:0007669"/>
    <property type="project" value="UniProtKB-KW"/>
</dbReference>
<dbReference type="InterPro" id="IPR005617">
    <property type="entry name" value="Groucho/TLE_N"/>
</dbReference>
<dbReference type="InterPro" id="IPR009146">
    <property type="entry name" value="Groucho_enhance"/>
</dbReference>
<dbReference type="PANTHER" id="PTHR10814">
    <property type="entry name" value="TRANSDUCIN-LIKE ENHANCER PROTEIN"/>
    <property type="match status" value="1"/>
</dbReference>
<dbReference type="PANTHER" id="PTHR10814:SF31">
    <property type="entry name" value="TRANSDUCIN-LIKE ENHANCER PROTEIN 4"/>
    <property type="match status" value="1"/>
</dbReference>
<dbReference type="Pfam" id="PF03920">
    <property type="entry name" value="TLE_N"/>
    <property type="match status" value="1"/>
</dbReference>
<feature type="chain" id="PRO_0000050836" description="TLE family member 5">
    <location>
        <begin position="1"/>
        <end position="197"/>
    </location>
</feature>
<feature type="region of interest" description="CCN domain">
    <location>
        <begin position="166"/>
        <end position="197"/>
    </location>
</feature>
<feature type="region of interest" description="Disordered" evidence="4">
    <location>
        <begin position="170"/>
        <end position="197"/>
    </location>
</feature>
<feature type="compositionally biased region" description="Basic and acidic residues" evidence="4">
    <location>
        <begin position="175"/>
        <end position="197"/>
    </location>
</feature>
<feature type="modified residue" description="Phosphoserine" evidence="7">
    <location>
        <position position="196"/>
    </location>
</feature>
<reference key="1">
    <citation type="journal article" date="1993" name="J. Biol. Chem.">
        <title>A rat homolog of the Drosophila enhancer of split (groucho) locus lacking WD-40 repeats.</title>
        <authorList>
            <person name="Schmidt C.J."/>
            <person name="Sladek T.E."/>
        </authorList>
    </citation>
    <scope>NUCLEOTIDE SEQUENCE [MRNA]</scope>
    <source>
        <tissue>Hippocampus</tissue>
    </source>
</reference>
<reference key="2">
    <citation type="journal article" date="2004" name="Genome Res.">
        <title>The status, quality, and expansion of the NIH full-length cDNA project: the Mammalian Gene Collection (MGC).</title>
        <authorList>
            <consortium name="The MGC Project Team"/>
        </authorList>
    </citation>
    <scope>NUCLEOTIDE SEQUENCE [LARGE SCALE MRNA]</scope>
    <source>
        <tissue>Prostate</tissue>
    </source>
</reference>
<reference key="3">
    <citation type="journal article" date="2012" name="Nat. Commun.">
        <title>Quantitative maps of protein phosphorylation sites across 14 different rat organs and tissues.</title>
        <authorList>
            <person name="Lundby A."/>
            <person name="Secher A."/>
            <person name="Lage K."/>
            <person name="Nordsborg N.B."/>
            <person name="Dmytriyev A."/>
            <person name="Lundby C."/>
            <person name="Olsen J.V."/>
        </authorList>
    </citation>
    <scope>PHOSPHORYLATION [LARGE SCALE ANALYSIS] AT SER-196</scope>
    <scope>IDENTIFICATION BY MASS SPECTROMETRY [LARGE SCALE ANALYSIS]</scope>
</reference>
<gene>
    <name type="primary">Tle5</name>
    <name evidence="6" type="synonym">Aes</name>
    <name type="synonym">Esp1</name>
    <name type="synonym">Grg</name>
    <name type="synonym">Grg5</name>
</gene>
<sequence>MMFPQSRHSGSSHLPQQLKFTTSDSCDRIKDEFQLLQAQYHSLKLECDKLASEKSEMQRHYVMYYEMSYGLNIEMHKQAEIVKRLNGICAQVLPYLSQEHQQQVLGAIERAKQVTAPELNSIIRQQLQAHQLSQLQALALPLTPLPVGLQPPSLPAVSAGTGLLSLSALGSQTHLSKEDKNGHDGDTHQEDDGEKSD</sequence>
<protein>
    <recommendedName>
        <fullName>TLE family member 5</fullName>
    </recommendedName>
    <alternativeName>
        <fullName>Amino-terminal enhancer of split</fullName>
        <shortName>Amino enhancer of split</shortName>
    </alternativeName>
    <alternativeName>
        <fullName>Grg-5</fullName>
    </alternativeName>
    <alternativeName>
        <fullName>Groucho-related protein 5</fullName>
    </alternativeName>
    <alternativeName>
        <fullName>Protein ESP1</fullName>
        <shortName>R-esp1</shortName>
    </alternativeName>
    <alternativeName>
        <fullName>Protein GRG</fullName>
    </alternativeName>
</protein>
<keyword id="KW-0539">Nucleus</keyword>
<keyword id="KW-0597">Phosphoprotein</keyword>
<keyword id="KW-1185">Reference proteome</keyword>
<keyword id="KW-0678">Repressor</keyword>
<keyword id="KW-0804">Transcription</keyword>
<keyword id="KW-0805">Transcription regulation</keyword>
<keyword id="KW-0832">Ubl conjugation</keyword>
<keyword id="KW-0879">Wnt signaling pathway</keyword>
<proteinExistence type="evidence at protein level"/>
<evidence type="ECO:0000250" key="1"/>
<evidence type="ECO:0000250" key="2">
    <source>
        <dbReference type="UniProtKB" id="P63002"/>
    </source>
</evidence>
<evidence type="ECO:0000250" key="3">
    <source>
        <dbReference type="UniProtKB" id="Q08117"/>
    </source>
</evidence>
<evidence type="ECO:0000256" key="4">
    <source>
        <dbReference type="SAM" id="MobiDB-lite"/>
    </source>
</evidence>
<evidence type="ECO:0000305" key="5"/>
<evidence type="ECO:0000312" key="6">
    <source>
        <dbReference type="RGD" id="2731"/>
    </source>
</evidence>
<evidence type="ECO:0007744" key="7">
    <source>
    </source>
</evidence>